<comment type="function">
    <text evidence="1">Catalyzes the transfer of an acyl group from acyl-phosphate (acyl-PO(4)) to glycerol-3-phosphate (G3P) to form lysophosphatidic acid (LPA). This enzyme utilizes acyl-phosphate as fatty acyl donor, but not acyl-CoA or acyl-ACP.</text>
</comment>
<comment type="catalytic activity">
    <reaction evidence="1">
        <text>an acyl phosphate + sn-glycerol 3-phosphate = a 1-acyl-sn-glycero-3-phosphate + phosphate</text>
        <dbReference type="Rhea" id="RHEA:34075"/>
        <dbReference type="ChEBI" id="CHEBI:43474"/>
        <dbReference type="ChEBI" id="CHEBI:57597"/>
        <dbReference type="ChEBI" id="CHEBI:57970"/>
        <dbReference type="ChEBI" id="CHEBI:59918"/>
        <dbReference type="EC" id="2.3.1.275"/>
    </reaction>
</comment>
<comment type="pathway">
    <text evidence="1">Lipid metabolism; phospholipid metabolism.</text>
</comment>
<comment type="subunit">
    <text evidence="1">Probably interacts with PlsX.</text>
</comment>
<comment type="subcellular location">
    <subcellularLocation>
        <location evidence="1">Cell inner membrane</location>
        <topology evidence="1">Multi-pass membrane protein</topology>
    </subcellularLocation>
</comment>
<comment type="similarity">
    <text evidence="1">Belongs to the PlsY family.</text>
</comment>
<organism>
    <name type="scientific">Aliarcobacter butzleri (strain RM4018)</name>
    <name type="common">Arcobacter butzleri</name>
    <dbReference type="NCBI Taxonomy" id="367737"/>
    <lineage>
        <taxon>Bacteria</taxon>
        <taxon>Pseudomonadati</taxon>
        <taxon>Campylobacterota</taxon>
        <taxon>Epsilonproteobacteria</taxon>
        <taxon>Campylobacterales</taxon>
        <taxon>Arcobacteraceae</taxon>
        <taxon>Aliarcobacter</taxon>
    </lineage>
</organism>
<keyword id="KW-0997">Cell inner membrane</keyword>
<keyword id="KW-1003">Cell membrane</keyword>
<keyword id="KW-0444">Lipid biosynthesis</keyword>
<keyword id="KW-0443">Lipid metabolism</keyword>
<keyword id="KW-0472">Membrane</keyword>
<keyword id="KW-0594">Phospholipid biosynthesis</keyword>
<keyword id="KW-1208">Phospholipid metabolism</keyword>
<keyword id="KW-1185">Reference proteome</keyword>
<keyword id="KW-0808">Transferase</keyword>
<keyword id="KW-0812">Transmembrane</keyword>
<keyword id="KW-1133">Transmembrane helix</keyword>
<accession>A8EWC8</accession>
<gene>
    <name evidence="1" type="primary">plsY</name>
    <name type="ordered locus">Abu_2034</name>
</gene>
<feature type="chain" id="PRO_1000064158" description="Glycerol-3-phosphate acyltransferase">
    <location>
        <begin position="1"/>
        <end position="207"/>
    </location>
</feature>
<feature type="transmembrane region" description="Helical" evidence="1">
    <location>
        <begin position="8"/>
        <end position="28"/>
    </location>
</feature>
<feature type="transmembrane region" description="Helical" evidence="1">
    <location>
        <begin position="64"/>
        <end position="84"/>
    </location>
</feature>
<feature type="transmembrane region" description="Helical" evidence="1">
    <location>
        <begin position="92"/>
        <end position="112"/>
    </location>
</feature>
<feature type="transmembrane region" description="Helical" evidence="1">
    <location>
        <begin position="122"/>
        <end position="142"/>
    </location>
</feature>
<feature type="transmembrane region" description="Helical" evidence="1">
    <location>
        <begin position="154"/>
        <end position="174"/>
    </location>
</feature>
<feature type="transmembrane region" description="Helical" evidence="1">
    <location>
        <begin position="176"/>
        <end position="196"/>
    </location>
</feature>
<proteinExistence type="inferred from homology"/>
<protein>
    <recommendedName>
        <fullName evidence="1">Glycerol-3-phosphate acyltransferase</fullName>
    </recommendedName>
    <alternativeName>
        <fullName evidence="1">Acyl-PO4 G3P acyltransferase</fullName>
    </alternativeName>
    <alternativeName>
        <fullName evidence="1">Acyl-phosphate--glycerol-3-phosphate acyltransferase</fullName>
    </alternativeName>
    <alternativeName>
        <fullName evidence="1">G3P acyltransferase</fullName>
        <shortName evidence="1">GPAT</shortName>
        <ecNumber evidence="1">2.3.1.275</ecNumber>
    </alternativeName>
    <alternativeName>
        <fullName evidence="1">Lysophosphatidic acid synthase</fullName>
        <shortName evidence="1">LPA synthase</shortName>
    </alternativeName>
</protein>
<reference key="1">
    <citation type="journal article" date="2007" name="PLoS ONE">
        <title>The complete genome sequence and analysis of the Epsilonproteobacterium Arcobacter butzleri.</title>
        <authorList>
            <person name="Miller W.G."/>
            <person name="Parker C.T."/>
            <person name="Rubenfield M."/>
            <person name="Mendz G.L."/>
            <person name="Woesten M.M.S.M."/>
            <person name="Ussery D.W."/>
            <person name="Stolz J.F."/>
            <person name="Binnewies T.T."/>
            <person name="Hallin P.F."/>
            <person name="Wang G."/>
            <person name="Malek J.A."/>
            <person name="Rogosin A."/>
            <person name="Stanker L.H."/>
            <person name="Mandrell R.E."/>
        </authorList>
    </citation>
    <scope>NUCLEOTIDE SEQUENCE [LARGE SCALE GENOMIC DNA]</scope>
    <source>
        <strain>RM4018</strain>
    </source>
</reference>
<dbReference type="EC" id="2.3.1.275" evidence="1"/>
<dbReference type="EMBL" id="CP000361">
    <property type="protein sequence ID" value="ABV68251.1"/>
    <property type="molecule type" value="Genomic_DNA"/>
</dbReference>
<dbReference type="RefSeq" id="WP_012147920.1">
    <property type="nucleotide sequence ID" value="NC_009850.1"/>
</dbReference>
<dbReference type="SMR" id="A8EWC8"/>
<dbReference type="STRING" id="367737.Abu_2034"/>
<dbReference type="GeneID" id="24304161"/>
<dbReference type="KEGG" id="abu:Abu_2034"/>
<dbReference type="eggNOG" id="COG0344">
    <property type="taxonomic scope" value="Bacteria"/>
</dbReference>
<dbReference type="HOGENOM" id="CLU_081254_2_0_7"/>
<dbReference type="UniPathway" id="UPA00085"/>
<dbReference type="Proteomes" id="UP000001136">
    <property type="component" value="Chromosome"/>
</dbReference>
<dbReference type="GO" id="GO:0005886">
    <property type="term" value="C:plasma membrane"/>
    <property type="evidence" value="ECO:0007669"/>
    <property type="project" value="UniProtKB-SubCell"/>
</dbReference>
<dbReference type="GO" id="GO:0043772">
    <property type="term" value="F:acyl-phosphate glycerol-3-phosphate acyltransferase activity"/>
    <property type="evidence" value="ECO:0007669"/>
    <property type="project" value="UniProtKB-UniRule"/>
</dbReference>
<dbReference type="GO" id="GO:0008654">
    <property type="term" value="P:phospholipid biosynthetic process"/>
    <property type="evidence" value="ECO:0007669"/>
    <property type="project" value="UniProtKB-UniRule"/>
</dbReference>
<dbReference type="HAMAP" id="MF_01043">
    <property type="entry name" value="PlsY"/>
    <property type="match status" value="1"/>
</dbReference>
<dbReference type="InterPro" id="IPR003811">
    <property type="entry name" value="G3P_acylTferase_PlsY"/>
</dbReference>
<dbReference type="NCBIfam" id="TIGR00023">
    <property type="entry name" value="glycerol-3-phosphate 1-O-acyltransferase PlsY"/>
    <property type="match status" value="1"/>
</dbReference>
<dbReference type="PANTHER" id="PTHR30309:SF0">
    <property type="entry name" value="GLYCEROL-3-PHOSPHATE ACYLTRANSFERASE-RELATED"/>
    <property type="match status" value="1"/>
</dbReference>
<dbReference type="PANTHER" id="PTHR30309">
    <property type="entry name" value="INNER MEMBRANE PROTEIN YGIH"/>
    <property type="match status" value="1"/>
</dbReference>
<dbReference type="Pfam" id="PF02660">
    <property type="entry name" value="G3P_acyltransf"/>
    <property type="match status" value="1"/>
</dbReference>
<dbReference type="SMART" id="SM01207">
    <property type="entry name" value="G3P_acyltransf"/>
    <property type="match status" value="1"/>
</dbReference>
<name>PLSY_ALIB4</name>
<evidence type="ECO:0000255" key="1">
    <source>
        <dbReference type="HAMAP-Rule" id="MF_01043"/>
    </source>
</evidence>
<sequence length="207" mass="22026">MDFLTNQNIVFYLLAYLIGSIPFGLILAKTFAGVDIKSQGSKSIGATNVLRVVKQTNPSLAKKLGIATVLLDALKGTLVLLVGIYYGVTNETLWAIAVLAVLGHCYSIYLGLEGGKGVATGLGVYIVLIPYSTLIGAVVWIVCAKVLKISSLSSLLGLIAAVISAIFIYNGLGINSNIPMYLIAFIILYKHIPNIVRLIKGQEGKVI</sequence>